<accession>Q58621</accession>
<proteinExistence type="inferred from homology"/>
<gene>
    <name type="ordered locus">MJ1224</name>
</gene>
<name>Y1224_METJA</name>
<feature type="chain" id="PRO_0000144224" description="UPF0216 protein MJ1224">
    <location>
        <begin position="1"/>
        <end position="139"/>
    </location>
</feature>
<keyword id="KW-1185">Reference proteome</keyword>
<reference key="1">
    <citation type="journal article" date="1996" name="Science">
        <title>Complete genome sequence of the methanogenic archaeon, Methanococcus jannaschii.</title>
        <authorList>
            <person name="Bult C.J."/>
            <person name="White O."/>
            <person name="Olsen G.J."/>
            <person name="Zhou L."/>
            <person name="Fleischmann R.D."/>
            <person name="Sutton G.G."/>
            <person name="Blake J.A."/>
            <person name="FitzGerald L.M."/>
            <person name="Clayton R.A."/>
            <person name="Gocayne J.D."/>
            <person name="Kerlavage A.R."/>
            <person name="Dougherty B.A."/>
            <person name="Tomb J.-F."/>
            <person name="Adams M.D."/>
            <person name="Reich C.I."/>
            <person name="Overbeek R."/>
            <person name="Kirkness E.F."/>
            <person name="Weinstock K.G."/>
            <person name="Merrick J.M."/>
            <person name="Glodek A."/>
            <person name="Scott J.L."/>
            <person name="Geoghagen N.S.M."/>
            <person name="Weidman J.F."/>
            <person name="Fuhrmann J.L."/>
            <person name="Nguyen D."/>
            <person name="Utterback T.R."/>
            <person name="Kelley J.M."/>
            <person name="Peterson J.D."/>
            <person name="Sadow P.W."/>
            <person name="Hanna M.C."/>
            <person name="Cotton M.D."/>
            <person name="Roberts K.M."/>
            <person name="Hurst M.A."/>
            <person name="Kaine B.P."/>
            <person name="Borodovsky M."/>
            <person name="Klenk H.-P."/>
            <person name="Fraser C.M."/>
            <person name="Smith H.O."/>
            <person name="Woese C.R."/>
            <person name="Venter J.C."/>
        </authorList>
    </citation>
    <scope>NUCLEOTIDE SEQUENCE [LARGE SCALE GENOMIC DNA]</scope>
    <source>
        <strain>ATCC 43067 / DSM 2661 / JAL-1 / JCM 10045 / NBRC 100440</strain>
    </source>
</reference>
<evidence type="ECO:0000255" key="1">
    <source>
        <dbReference type="HAMAP-Rule" id="MF_00585"/>
    </source>
</evidence>
<protein>
    <recommendedName>
        <fullName evidence="1">UPF0216 protein MJ1224</fullName>
    </recommendedName>
</protein>
<organism>
    <name type="scientific">Methanocaldococcus jannaschii (strain ATCC 43067 / DSM 2661 / JAL-1 / JCM 10045 / NBRC 100440)</name>
    <name type="common">Methanococcus jannaschii</name>
    <dbReference type="NCBI Taxonomy" id="243232"/>
    <lineage>
        <taxon>Archaea</taxon>
        <taxon>Methanobacteriati</taxon>
        <taxon>Methanobacteriota</taxon>
        <taxon>Methanomada group</taxon>
        <taxon>Methanococci</taxon>
        <taxon>Methanococcales</taxon>
        <taxon>Methanocaldococcaceae</taxon>
        <taxon>Methanocaldococcus</taxon>
    </lineage>
</organism>
<comment type="similarity">
    <text evidence="1">Belongs to the UPF0216 family.</text>
</comment>
<sequence>MIILVMSMRDVEKIIKGIIKDMNPRFKRKTLRELLSEEKPHVIINGKRHRIKRRELEFLKEIASEDLKIPIVLEVDSSLGGAIKISGKEEVKVISKILGKEIDIFSEKDVMYIYKPELKIVRKELPTTTQLIFKLSLFD</sequence>
<dbReference type="EMBL" id="L77117">
    <property type="protein sequence ID" value="AAB99227.1"/>
    <property type="molecule type" value="Genomic_DNA"/>
</dbReference>
<dbReference type="PIR" id="G64452">
    <property type="entry name" value="G64452"/>
</dbReference>
<dbReference type="RefSeq" id="WP_010870736.1">
    <property type="nucleotide sequence ID" value="NC_000909.1"/>
</dbReference>
<dbReference type="SMR" id="Q58621"/>
<dbReference type="STRING" id="243232.MJ_1224"/>
<dbReference type="PaxDb" id="243232-MJ_1224"/>
<dbReference type="EnsemblBacteria" id="AAB99227">
    <property type="protein sequence ID" value="AAB99227"/>
    <property type="gene ID" value="MJ_1224"/>
</dbReference>
<dbReference type="GeneID" id="1452120"/>
<dbReference type="KEGG" id="mja:MJ_1224"/>
<dbReference type="eggNOG" id="arCOG01921">
    <property type="taxonomic scope" value="Archaea"/>
</dbReference>
<dbReference type="HOGENOM" id="CLU_146474_1_0_2"/>
<dbReference type="InParanoid" id="Q58621"/>
<dbReference type="OrthoDB" id="18795at2157"/>
<dbReference type="PhylomeDB" id="Q58621"/>
<dbReference type="Proteomes" id="UP000000805">
    <property type="component" value="Chromosome"/>
</dbReference>
<dbReference type="HAMAP" id="MF_00585">
    <property type="entry name" value="UPF0216"/>
    <property type="match status" value="1"/>
</dbReference>
<dbReference type="InterPro" id="IPR002746">
    <property type="entry name" value="UPF0216"/>
</dbReference>
<dbReference type="NCBIfam" id="NF003153">
    <property type="entry name" value="PRK04115.1"/>
    <property type="match status" value="1"/>
</dbReference>
<dbReference type="Pfam" id="PF01886">
    <property type="entry name" value="DUF61"/>
    <property type="match status" value="1"/>
</dbReference>
<dbReference type="PIRSF" id="PIRSF005264">
    <property type="entry name" value="UCP005264"/>
    <property type="match status" value="1"/>
</dbReference>